<comment type="function">
    <text evidence="1">Redox regulated molecular chaperone. Protects both thermally unfolding and oxidatively damaged proteins from irreversible aggregation. Plays an important role in the bacterial defense system toward oxidative stress.</text>
</comment>
<comment type="subcellular location">
    <subcellularLocation>
        <location evidence="1">Cytoplasm</location>
    </subcellularLocation>
</comment>
<comment type="PTM">
    <text evidence="1">Under oxidizing conditions two disulfide bonds are formed involving the reactive cysteines. Under reducing conditions zinc is bound to the reactive cysteines and the protein is inactive.</text>
</comment>
<comment type="similarity">
    <text evidence="1">Belongs to the HSP33 family.</text>
</comment>
<proteinExistence type="inferred from homology"/>
<accession>Q6HPV0</accession>
<protein>
    <recommendedName>
        <fullName evidence="1">33 kDa chaperonin</fullName>
    </recommendedName>
    <alternativeName>
        <fullName evidence="1">Heat shock protein 33 homolog</fullName>
        <shortName evidence="1">HSP33</shortName>
    </alternativeName>
</protein>
<dbReference type="EMBL" id="AE017355">
    <property type="protein sequence ID" value="AAT62182.1"/>
    <property type="molecule type" value="Genomic_DNA"/>
</dbReference>
<dbReference type="RefSeq" id="WP_000656366.1">
    <property type="nucleotide sequence ID" value="NC_005957.1"/>
</dbReference>
<dbReference type="RefSeq" id="YP_034420.1">
    <property type="nucleotide sequence ID" value="NC_005957.1"/>
</dbReference>
<dbReference type="SMR" id="Q6HPV0"/>
<dbReference type="GeneID" id="75083333"/>
<dbReference type="KEGG" id="btk:BT9727_0062"/>
<dbReference type="PATRIC" id="fig|281309.8.peg.64"/>
<dbReference type="HOGENOM" id="CLU_054493_1_0_9"/>
<dbReference type="Proteomes" id="UP000001301">
    <property type="component" value="Chromosome"/>
</dbReference>
<dbReference type="GO" id="GO:0005737">
    <property type="term" value="C:cytoplasm"/>
    <property type="evidence" value="ECO:0007669"/>
    <property type="project" value="UniProtKB-SubCell"/>
</dbReference>
<dbReference type="GO" id="GO:0044183">
    <property type="term" value="F:protein folding chaperone"/>
    <property type="evidence" value="ECO:0007669"/>
    <property type="project" value="TreeGrafter"/>
</dbReference>
<dbReference type="GO" id="GO:0051082">
    <property type="term" value="F:unfolded protein binding"/>
    <property type="evidence" value="ECO:0007669"/>
    <property type="project" value="UniProtKB-UniRule"/>
</dbReference>
<dbReference type="GO" id="GO:0042026">
    <property type="term" value="P:protein refolding"/>
    <property type="evidence" value="ECO:0007669"/>
    <property type="project" value="TreeGrafter"/>
</dbReference>
<dbReference type="CDD" id="cd00498">
    <property type="entry name" value="Hsp33"/>
    <property type="match status" value="1"/>
</dbReference>
<dbReference type="Gene3D" id="3.55.30.10">
    <property type="entry name" value="Hsp33 domain"/>
    <property type="match status" value="1"/>
</dbReference>
<dbReference type="Gene3D" id="3.90.1280.10">
    <property type="entry name" value="HSP33 redox switch-like"/>
    <property type="match status" value="1"/>
</dbReference>
<dbReference type="HAMAP" id="MF_00117">
    <property type="entry name" value="HslO"/>
    <property type="match status" value="1"/>
</dbReference>
<dbReference type="InterPro" id="IPR000397">
    <property type="entry name" value="Heat_shock_Hsp33"/>
</dbReference>
<dbReference type="InterPro" id="IPR016154">
    <property type="entry name" value="Heat_shock_Hsp33_C"/>
</dbReference>
<dbReference type="InterPro" id="IPR016153">
    <property type="entry name" value="Heat_shock_Hsp33_N"/>
</dbReference>
<dbReference type="NCBIfam" id="NF001033">
    <property type="entry name" value="PRK00114.1"/>
    <property type="match status" value="1"/>
</dbReference>
<dbReference type="PANTHER" id="PTHR30111">
    <property type="entry name" value="33 KDA CHAPERONIN"/>
    <property type="match status" value="1"/>
</dbReference>
<dbReference type="PANTHER" id="PTHR30111:SF1">
    <property type="entry name" value="33 KDA CHAPERONIN"/>
    <property type="match status" value="1"/>
</dbReference>
<dbReference type="Pfam" id="PF01430">
    <property type="entry name" value="HSP33"/>
    <property type="match status" value="1"/>
</dbReference>
<dbReference type="PIRSF" id="PIRSF005261">
    <property type="entry name" value="Heat_shock_Hsp33"/>
    <property type="match status" value="1"/>
</dbReference>
<dbReference type="SUPFAM" id="SSF64397">
    <property type="entry name" value="Hsp33 domain"/>
    <property type="match status" value="1"/>
</dbReference>
<dbReference type="SUPFAM" id="SSF118352">
    <property type="entry name" value="HSP33 redox switch-like"/>
    <property type="match status" value="1"/>
</dbReference>
<reference key="1">
    <citation type="journal article" date="2006" name="J. Bacteriol.">
        <title>Pathogenomic sequence analysis of Bacillus cereus and Bacillus thuringiensis isolates closely related to Bacillus anthracis.</title>
        <authorList>
            <person name="Han C.S."/>
            <person name="Xie G."/>
            <person name="Challacombe J.F."/>
            <person name="Altherr M.R."/>
            <person name="Bhotika S.S."/>
            <person name="Bruce D."/>
            <person name="Campbell C.S."/>
            <person name="Campbell M.L."/>
            <person name="Chen J."/>
            <person name="Chertkov O."/>
            <person name="Cleland C."/>
            <person name="Dimitrijevic M."/>
            <person name="Doggett N.A."/>
            <person name="Fawcett J.J."/>
            <person name="Glavina T."/>
            <person name="Goodwin L.A."/>
            <person name="Hill K.K."/>
            <person name="Hitchcock P."/>
            <person name="Jackson P.J."/>
            <person name="Keim P."/>
            <person name="Kewalramani A.R."/>
            <person name="Longmire J."/>
            <person name="Lucas S."/>
            <person name="Malfatti S."/>
            <person name="McMurry K."/>
            <person name="Meincke L.J."/>
            <person name="Misra M."/>
            <person name="Moseman B.L."/>
            <person name="Mundt M."/>
            <person name="Munk A.C."/>
            <person name="Okinaka R.T."/>
            <person name="Parson-Quintana B."/>
            <person name="Reilly L.P."/>
            <person name="Richardson P."/>
            <person name="Robinson D.L."/>
            <person name="Rubin E."/>
            <person name="Saunders E."/>
            <person name="Tapia R."/>
            <person name="Tesmer J.G."/>
            <person name="Thayer N."/>
            <person name="Thompson L.S."/>
            <person name="Tice H."/>
            <person name="Ticknor L.O."/>
            <person name="Wills P.L."/>
            <person name="Brettin T.S."/>
            <person name="Gilna P."/>
        </authorList>
    </citation>
    <scope>NUCLEOTIDE SEQUENCE [LARGE SCALE GENOMIC DNA]</scope>
    <source>
        <strain>97-27</strain>
    </source>
</reference>
<feature type="chain" id="PRO_0000238062" description="33 kDa chaperonin">
    <location>
        <begin position="1"/>
        <end position="291"/>
    </location>
</feature>
<feature type="disulfide bond" description="Redox-active" evidence="1">
    <location>
        <begin position="237"/>
        <end position="239"/>
    </location>
</feature>
<feature type="disulfide bond" description="Redox-active" evidence="1">
    <location>
        <begin position="270"/>
        <end position="273"/>
    </location>
</feature>
<name>HSLO_BACHK</name>
<sequence length="291" mass="32058">MKDYLVKALAFDGEVRAYSVRTTNTVSEAQRRHDTWRTASAALGRSLTAGTMMGAMLKGDQKLTIKVEGNGPIGPILVDAHANGDVRGYVTNPHVDFEGTEQGKLRVYQAVGTEGFVTVIKDIGMREPFIGQSPIVSGELGEDFTYYFAVSEQTPSSVGVGVLVNGDDSILAAGGFILQIMPGAQEETISFIEERLQKIPPVSTLIEQGLSPEELLYAVLGEDKVKVLETMDVQFNCTCSRERIESVLISLGKTELEQVREEEEETEVHCHFCNERYKFSKEDITNLIENL</sequence>
<evidence type="ECO:0000255" key="1">
    <source>
        <dbReference type="HAMAP-Rule" id="MF_00117"/>
    </source>
</evidence>
<gene>
    <name evidence="1" type="primary">hslO</name>
    <name type="ordered locus">BT9727_0062</name>
</gene>
<keyword id="KW-0143">Chaperone</keyword>
<keyword id="KW-0963">Cytoplasm</keyword>
<keyword id="KW-1015">Disulfide bond</keyword>
<keyword id="KW-0676">Redox-active center</keyword>
<keyword id="KW-0862">Zinc</keyword>
<organism>
    <name type="scientific">Bacillus thuringiensis subsp. konkukian (strain 97-27)</name>
    <dbReference type="NCBI Taxonomy" id="281309"/>
    <lineage>
        <taxon>Bacteria</taxon>
        <taxon>Bacillati</taxon>
        <taxon>Bacillota</taxon>
        <taxon>Bacilli</taxon>
        <taxon>Bacillales</taxon>
        <taxon>Bacillaceae</taxon>
        <taxon>Bacillus</taxon>
        <taxon>Bacillus cereus group</taxon>
    </lineage>
</organism>